<keyword id="KW-0596">Phosphopantetheine</keyword>
<keyword id="KW-0597">Phosphoprotein</keyword>
<keyword id="KW-0808">Transferase</keyword>
<sequence length="953" mass="104561">MTPIAVTPVAPVDIIYDLKHTERATESSPVTLLDVFSRAVSQYPNHELSFITSSAHDSTIHTKTFAEFNQDVHALAQAMRAWGKPTGSVIVVYLTEHEDNMAAVWASLLAGYVPCLQPALSAQQAHKEGHVGHIKNLFSSATWLTNESGAEQVQSISGLDIHLLSELKASAEAGVDFQAHQPNSDDEAILFLTSGSTGFSKAVVHTHRTILAACHAKGESYGLTSESKIMNWVGFDHVAGSLEMHIAPLLYGASQLHVHASAILSDPLRFLHLIEEKSIQLAFAPNFLLAKLTRDLEKRSDLFGKFDLSSIKRINSGGEAVVSSTAQAFARTLKNLAKDGDASFVISAGFGMTETCAGCIYDPINVLETPPSYEFLELGTPVAGCEMRVVNPEDGVTPRPDGESGELQVRGPMVFVRYYNNPEATSSSFVEGGWYRTGDVGIVEQGKMRLSGRIKDTVIVHGVSYGIPELETYLQTVEGVTHSFLAAAPYRAPGQETEGFVVFYSPTFDLDSEDAPAKLFATHRALRDVSVKLITLPPQQIIPIPINQMEKTTLGKLSRARLVNLFKQGELAKHIDRAEELVSIARGASFVAPSTETEKTLAGIYAGIFNLSVGDMSASENFFELGGTSIDVIRLKREGESAFDLPEIPTIQILKHPVISSLAKYVDSLISKDASQEEYDPIVPLQLTGNKTPIFMVHPGVGEVLIFVNLAKYFQNERPFYALRARGFEPGHPFFTTMDEMVSSYAAAIKRTQAHGPYAIAGYSYGGVVAFEVAKRLEAMGDEVKFTGLINIPPHIADRMHEIDWTGGMLNLSYFLGLVSKQDANDLAPSMRPLTRKEQLEIVWKLSPPERLVELQLTPEKLDHWVDIAGSLIECGKTYEPASSVSVLDVFYAIPLRGSKEDWLNNQLKPWAGYSRAEPSYTDVPGQHYTLMDFDHVPGFQKIFRSRLEARGL</sequence>
<reference key="1">
    <citation type="journal article" date="2015" name="Chem. Biol.">
        <title>Three redundant synthetases secure redox-active pigment production in the basidiomycete Paxillus involutus.</title>
        <authorList>
            <person name="Braesel J."/>
            <person name="Gotze S."/>
            <person name="Shah F."/>
            <person name="Heine D."/>
            <person name="Tauber J."/>
            <person name="Hertweck C."/>
            <person name="Tunlid A."/>
            <person name="Stallforth P."/>
            <person name="Hoffmeister D."/>
        </authorList>
    </citation>
    <scope>NUCLEOTIDE SEQUENCE [GENOMIC DNA]</scope>
    <scope>FUNCTION</scope>
    <scope>BIOPHYSICOCHEMICAL PROPERTIES</scope>
    <source>
        <strain>ATCC MYA-4647</strain>
    </source>
</reference>
<name>INVA2_PAXIN</name>
<accession>A0A0S1RUN4</accession>
<proteinExistence type="evidence at protein level"/>
<gene>
    <name type="primary">invA2</name>
</gene>
<feature type="chain" id="PRO_0000442621" description="Atromentin synthetase invA2">
    <location>
        <begin position="1"/>
        <end position="953"/>
    </location>
</feature>
<feature type="domain" description="Carrier" evidence="3">
    <location>
        <begin position="592"/>
        <end position="670"/>
    </location>
</feature>
<feature type="region of interest" description="Adenylation (A) domain" evidence="2">
    <location>
        <begin position="38"/>
        <end position="460"/>
    </location>
</feature>
<feature type="region of interest" description="Thiolation and peptide carrier (T) domain" evidence="2">
    <location>
        <begin position="597"/>
        <end position="667"/>
    </location>
</feature>
<feature type="region of interest" description="Thioesterase (TE) domain" evidence="2">
    <location>
        <begin position="693"/>
        <end position="795"/>
    </location>
</feature>
<feature type="modified residue" description="O-(pantetheine 4'-phosphoryl)serine" evidence="3">
    <location>
        <position position="629"/>
    </location>
</feature>
<organism>
    <name type="scientific">Paxillus involutus</name>
    <name type="common">Naked brimcap</name>
    <dbReference type="NCBI Taxonomy" id="71150"/>
    <lineage>
        <taxon>Eukaryota</taxon>
        <taxon>Fungi</taxon>
        <taxon>Dikarya</taxon>
        <taxon>Basidiomycota</taxon>
        <taxon>Agaricomycotina</taxon>
        <taxon>Agaricomycetes</taxon>
        <taxon>Agaricomycetidae</taxon>
        <taxon>Boletales</taxon>
        <taxon>Paxilineae</taxon>
        <taxon>Paxillaceae</taxon>
        <taxon>Paxillus</taxon>
    </lineage>
</organism>
<evidence type="ECO:0000250" key="1">
    <source>
        <dbReference type="UniProtKB" id="B7STY1"/>
    </source>
</evidence>
<evidence type="ECO:0000255" key="2"/>
<evidence type="ECO:0000255" key="3">
    <source>
        <dbReference type="PROSITE-ProRule" id="PRU00258"/>
    </source>
</evidence>
<evidence type="ECO:0000269" key="4">
    <source>
    </source>
</evidence>
<evidence type="ECO:0000305" key="5"/>
<comment type="function">
    <text evidence="4">An L-tyrosine:2-oxoglutarate aminotransferase (probably invD) and atromentin synthetase invA2 catalyze consecutive steps to turn over L-tyrosine into atromentin, which represents the generic precursor molecule for the entire terphenylquinone and pulvinic acid family of pigments, which are widely distributed secondary metabolites in homobasidiomycetes. The first step catalyzed by the aminotransferase converts L-tyrosine in to 4-hydroxyphenylpyruvate (4-HPP). Adenylation of two 4-HPP monomers by the invA2 adenylation (A) domain, covalent tethering of the monomers as a thioester and oxoester onto the invA2 thiolation (T) and thioesterase (TE) domains, respectively, and symmetric C-C-bond formation between two monomers catalyzed by the invA2 TE domain leads to atromentin.</text>
</comment>
<comment type="biophysicochemical properties">
    <phDependence>
        <text evidence="4">Optimum pH is 7.6.</text>
    </phDependence>
    <temperatureDependence>
        <text evidence="4">Optimum temperature is 20 degrees Celsius.</text>
    </temperatureDependence>
</comment>
<comment type="pathway">
    <text evidence="1">Secondary metabolite biosynthesis.</text>
</comment>
<comment type="similarity">
    <text evidence="5">Belongs to the ATP-dependent AMP-binding enzyme family.</text>
</comment>
<dbReference type="EC" id="2.3.1.-"/>
<dbReference type="EMBL" id="KT935508">
    <property type="protein sequence ID" value="ALL98445.1"/>
    <property type="molecule type" value="Genomic_DNA"/>
</dbReference>
<dbReference type="SMR" id="A0A0S1RUN4"/>
<dbReference type="ESTHER" id="paxin-inva2">
    <property type="family name" value="Thioesterase"/>
</dbReference>
<dbReference type="GO" id="GO:0016878">
    <property type="term" value="F:acid-thiol ligase activity"/>
    <property type="evidence" value="ECO:0007669"/>
    <property type="project" value="UniProtKB-ARBA"/>
</dbReference>
<dbReference type="GO" id="GO:0016740">
    <property type="term" value="F:transferase activity"/>
    <property type="evidence" value="ECO:0007669"/>
    <property type="project" value="UniProtKB-KW"/>
</dbReference>
<dbReference type="GO" id="GO:0009058">
    <property type="term" value="P:biosynthetic process"/>
    <property type="evidence" value="ECO:0007669"/>
    <property type="project" value="InterPro"/>
</dbReference>
<dbReference type="Gene3D" id="3.30.300.30">
    <property type="match status" value="1"/>
</dbReference>
<dbReference type="Gene3D" id="1.10.1200.10">
    <property type="entry name" value="ACP-like"/>
    <property type="match status" value="1"/>
</dbReference>
<dbReference type="Gene3D" id="3.40.50.1820">
    <property type="entry name" value="alpha/beta hydrolase"/>
    <property type="match status" value="1"/>
</dbReference>
<dbReference type="Gene3D" id="3.40.50.12780">
    <property type="entry name" value="N-terminal domain of ligase-like"/>
    <property type="match status" value="1"/>
</dbReference>
<dbReference type="InterPro" id="IPR029058">
    <property type="entry name" value="AB_hydrolase_fold"/>
</dbReference>
<dbReference type="InterPro" id="IPR036736">
    <property type="entry name" value="ACP-like_sf"/>
</dbReference>
<dbReference type="InterPro" id="IPR045851">
    <property type="entry name" value="AMP-bd_C_sf"/>
</dbReference>
<dbReference type="InterPro" id="IPR020845">
    <property type="entry name" value="AMP-binding_CS"/>
</dbReference>
<dbReference type="InterPro" id="IPR000873">
    <property type="entry name" value="AMP-dep_synth/lig_dom"/>
</dbReference>
<dbReference type="InterPro" id="IPR042099">
    <property type="entry name" value="ANL_N_sf"/>
</dbReference>
<dbReference type="InterPro" id="IPR050237">
    <property type="entry name" value="ATP-dep_AMP-bd_enzyme"/>
</dbReference>
<dbReference type="InterPro" id="IPR020802">
    <property type="entry name" value="PKS_thioesterase"/>
</dbReference>
<dbReference type="InterPro" id="IPR009081">
    <property type="entry name" value="PP-bd_ACP"/>
</dbReference>
<dbReference type="InterPro" id="IPR001031">
    <property type="entry name" value="Thioesterase"/>
</dbReference>
<dbReference type="PANTHER" id="PTHR43767">
    <property type="entry name" value="LONG-CHAIN-FATTY-ACID--COA LIGASE"/>
    <property type="match status" value="1"/>
</dbReference>
<dbReference type="PANTHER" id="PTHR43767:SF1">
    <property type="entry name" value="NONRIBOSOMAL PEPTIDE SYNTHASE PES1 (EUROFUNG)-RELATED"/>
    <property type="match status" value="1"/>
</dbReference>
<dbReference type="Pfam" id="PF00501">
    <property type="entry name" value="AMP-binding"/>
    <property type="match status" value="1"/>
</dbReference>
<dbReference type="Pfam" id="PF00550">
    <property type="entry name" value="PP-binding"/>
    <property type="match status" value="1"/>
</dbReference>
<dbReference type="Pfam" id="PF00975">
    <property type="entry name" value="Thioesterase"/>
    <property type="match status" value="1"/>
</dbReference>
<dbReference type="SMART" id="SM00824">
    <property type="entry name" value="PKS_TE"/>
    <property type="match status" value="1"/>
</dbReference>
<dbReference type="SUPFAM" id="SSF56801">
    <property type="entry name" value="Acetyl-CoA synthetase-like"/>
    <property type="match status" value="1"/>
</dbReference>
<dbReference type="SUPFAM" id="SSF47336">
    <property type="entry name" value="ACP-like"/>
    <property type="match status" value="1"/>
</dbReference>
<dbReference type="SUPFAM" id="SSF53474">
    <property type="entry name" value="alpha/beta-Hydrolases"/>
    <property type="match status" value="1"/>
</dbReference>
<dbReference type="PROSITE" id="PS00455">
    <property type="entry name" value="AMP_BINDING"/>
    <property type="match status" value="1"/>
</dbReference>
<dbReference type="PROSITE" id="PS50075">
    <property type="entry name" value="CARRIER"/>
    <property type="match status" value="1"/>
</dbReference>
<protein>
    <recommendedName>
        <fullName>Atromentin synthetase invA2</fullName>
        <ecNumber>2.3.1.-</ecNumber>
    </recommendedName>
    <alternativeName>
        <fullName>Nonribosomal peptide synthase-like enzyme invA2</fullName>
        <shortName>NRPS-like</shortName>
    </alternativeName>
</protein>